<protein>
    <recommendedName>
        <fullName evidence="1">Phospho-N-acetylmuramoyl-pentapeptide-transferase</fullName>
        <ecNumber evidence="1">2.7.8.13</ecNumber>
    </recommendedName>
    <alternativeName>
        <fullName evidence="1">UDP-MurNAc-pentapeptide phosphotransferase</fullName>
    </alternativeName>
</protein>
<feature type="chain" id="PRO_1000003037" description="Phospho-N-acetylmuramoyl-pentapeptide-transferase">
    <location>
        <begin position="1"/>
        <end position="366"/>
    </location>
</feature>
<feature type="transmembrane region" description="Helical" evidence="1">
    <location>
        <begin position="27"/>
        <end position="47"/>
    </location>
</feature>
<feature type="transmembrane region" description="Helical" evidence="1">
    <location>
        <begin position="71"/>
        <end position="91"/>
    </location>
</feature>
<feature type="transmembrane region" description="Helical" evidence="1">
    <location>
        <begin position="93"/>
        <end position="113"/>
    </location>
</feature>
<feature type="transmembrane region" description="Helical" evidence="1">
    <location>
        <begin position="134"/>
        <end position="154"/>
    </location>
</feature>
<feature type="transmembrane region" description="Helical" evidence="1">
    <location>
        <begin position="174"/>
        <end position="194"/>
    </location>
</feature>
<feature type="transmembrane region" description="Helical" evidence="1">
    <location>
        <begin position="205"/>
        <end position="225"/>
    </location>
</feature>
<feature type="transmembrane region" description="Helical" evidence="1">
    <location>
        <begin position="245"/>
        <end position="265"/>
    </location>
</feature>
<feature type="transmembrane region" description="Helical" evidence="1">
    <location>
        <begin position="268"/>
        <end position="288"/>
    </location>
</feature>
<feature type="transmembrane region" description="Helical" evidence="1">
    <location>
        <begin position="294"/>
        <end position="314"/>
    </location>
</feature>
<feature type="transmembrane region" description="Helical" evidence="1">
    <location>
        <begin position="343"/>
        <end position="363"/>
    </location>
</feature>
<comment type="function">
    <text evidence="1">Catalyzes the initial step of the lipid cycle reactions in the biosynthesis of the cell wall peptidoglycan: transfers peptidoglycan precursor phospho-MurNAc-pentapeptide from UDP-MurNAc-pentapeptide onto the lipid carrier undecaprenyl phosphate, yielding undecaprenyl-pyrophosphoryl-MurNAc-pentapeptide, known as lipid I.</text>
</comment>
<comment type="catalytic activity">
    <reaction evidence="1">
        <text>UDP-N-acetyl-alpha-D-muramoyl-L-alanyl-gamma-D-glutamyl-meso-2,6-diaminopimeloyl-D-alanyl-D-alanine + di-trans,octa-cis-undecaprenyl phosphate = di-trans,octa-cis-undecaprenyl diphospho-N-acetyl-alpha-D-muramoyl-L-alanyl-D-glutamyl-meso-2,6-diaminopimeloyl-D-alanyl-D-alanine + UMP</text>
        <dbReference type="Rhea" id="RHEA:28386"/>
        <dbReference type="ChEBI" id="CHEBI:57865"/>
        <dbReference type="ChEBI" id="CHEBI:60392"/>
        <dbReference type="ChEBI" id="CHEBI:61386"/>
        <dbReference type="ChEBI" id="CHEBI:61387"/>
        <dbReference type="EC" id="2.7.8.13"/>
    </reaction>
</comment>
<comment type="cofactor">
    <cofactor evidence="1">
        <name>Mg(2+)</name>
        <dbReference type="ChEBI" id="CHEBI:18420"/>
    </cofactor>
</comment>
<comment type="pathway">
    <text evidence="1">Cell wall biogenesis; peptidoglycan biosynthesis.</text>
</comment>
<comment type="subcellular location">
    <subcellularLocation>
        <location evidence="1">Cell inner membrane</location>
        <topology evidence="1">Multi-pass membrane protein</topology>
    </subcellularLocation>
</comment>
<comment type="similarity">
    <text evidence="1">Belongs to the glycosyltransferase 4 family. MraY subfamily.</text>
</comment>
<proteinExistence type="inferred from homology"/>
<reference key="1">
    <citation type="journal article" date="2006" name="Proc. Natl. Acad. Sci. U.S.A.">
        <title>The partitioned Rhizobium etli genome: genetic and metabolic redundancy in seven interacting replicons.</title>
        <authorList>
            <person name="Gonzalez V."/>
            <person name="Santamaria R.I."/>
            <person name="Bustos P."/>
            <person name="Hernandez-Gonzalez I."/>
            <person name="Medrano-Soto A."/>
            <person name="Moreno-Hagelsieb G."/>
            <person name="Janga S.C."/>
            <person name="Ramirez M.A."/>
            <person name="Jimenez-Jacinto V."/>
            <person name="Collado-Vides J."/>
            <person name="Davila G."/>
        </authorList>
    </citation>
    <scope>NUCLEOTIDE SEQUENCE [LARGE SCALE GENOMIC DNA]</scope>
    <source>
        <strain>ATCC 51251 / DSM 11541 / JCM 21823 / NBRC 15573 / CFN 42</strain>
    </source>
</reference>
<accession>Q2K6B8</accession>
<organism>
    <name type="scientific">Rhizobium etli (strain ATCC 51251 / DSM 11541 / JCM 21823 / NBRC 15573 / CFN 42)</name>
    <dbReference type="NCBI Taxonomy" id="347834"/>
    <lineage>
        <taxon>Bacteria</taxon>
        <taxon>Pseudomonadati</taxon>
        <taxon>Pseudomonadota</taxon>
        <taxon>Alphaproteobacteria</taxon>
        <taxon>Hyphomicrobiales</taxon>
        <taxon>Rhizobiaceae</taxon>
        <taxon>Rhizobium/Agrobacterium group</taxon>
        <taxon>Rhizobium</taxon>
    </lineage>
</organism>
<sequence length="366" mass="39013">MLIWLVELSEYFKFLNLFRYITFRTGAALFTSALIVFLFGPTIINSLRIRQGKGQPIRADGPQTHFKKAGTPTMGGLMILAGIVGASLLWADLSNVYVVATLLVTLGFGAIGFYDDYLKVTKQSHKGFSGKARLGIEFVIAGIAVYFMMRTALASGTAGSTFGSSIAFPFFKDFLINLGIMFVVFGGFVIVGAGNAVNLTDGLDGLAIVPVMIAAASFGVIAYLAGNVVFANYLQINFVPGTGELAVVLGAVIGAGLGFLWFNAPPAAIFMGDTGSLALGGTIGTVAVATKHEIVMAIIGGLFVMETLSVIIQVGFFKMTGRRVFLMAPIHHHFEKKGWTESQVVIRFWIIAVGLALLGLSTLKLR</sequence>
<name>MRAY_RHIEC</name>
<evidence type="ECO:0000255" key="1">
    <source>
        <dbReference type="HAMAP-Rule" id="MF_00038"/>
    </source>
</evidence>
<gene>
    <name evidence="1" type="primary">mraY</name>
    <name type="ordered locus">RHE_CH02850</name>
</gene>
<dbReference type="EC" id="2.7.8.13" evidence="1"/>
<dbReference type="EMBL" id="CP000133">
    <property type="protein sequence ID" value="ABC91618.1"/>
    <property type="molecule type" value="Genomic_DNA"/>
</dbReference>
<dbReference type="RefSeq" id="WP_011426095.1">
    <property type="nucleotide sequence ID" value="NC_007761.1"/>
</dbReference>
<dbReference type="SMR" id="Q2K6B8"/>
<dbReference type="KEGG" id="ret:RHE_CH02850"/>
<dbReference type="eggNOG" id="COG0472">
    <property type="taxonomic scope" value="Bacteria"/>
</dbReference>
<dbReference type="HOGENOM" id="CLU_023982_0_0_5"/>
<dbReference type="OrthoDB" id="9805475at2"/>
<dbReference type="UniPathway" id="UPA00219"/>
<dbReference type="Proteomes" id="UP000001936">
    <property type="component" value="Chromosome"/>
</dbReference>
<dbReference type="GO" id="GO:0005886">
    <property type="term" value="C:plasma membrane"/>
    <property type="evidence" value="ECO:0007669"/>
    <property type="project" value="UniProtKB-SubCell"/>
</dbReference>
<dbReference type="GO" id="GO:0046872">
    <property type="term" value="F:metal ion binding"/>
    <property type="evidence" value="ECO:0007669"/>
    <property type="project" value="UniProtKB-KW"/>
</dbReference>
<dbReference type="GO" id="GO:0008963">
    <property type="term" value="F:phospho-N-acetylmuramoyl-pentapeptide-transferase activity"/>
    <property type="evidence" value="ECO:0007669"/>
    <property type="project" value="UniProtKB-UniRule"/>
</dbReference>
<dbReference type="GO" id="GO:0051992">
    <property type="term" value="F:UDP-N-acetylmuramoyl-L-alanyl-D-glutamyl-meso-2,6-diaminopimelyl-D-alanyl-D-alanine:undecaprenyl-phosphate transferase activity"/>
    <property type="evidence" value="ECO:0007669"/>
    <property type="project" value="RHEA"/>
</dbReference>
<dbReference type="GO" id="GO:0051301">
    <property type="term" value="P:cell division"/>
    <property type="evidence" value="ECO:0007669"/>
    <property type="project" value="UniProtKB-KW"/>
</dbReference>
<dbReference type="GO" id="GO:0071555">
    <property type="term" value="P:cell wall organization"/>
    <property type="evidence" value="ECO:0007669"/>
    <property type="project" value="UniProtKB-KW"/>
</dbReference>
<dbReference type="GO" id="GO:0009252">
    <property type="term" value="P:peptidoglycan biosynthetic process"/>
    <property type="evidence" value="ECO:0007669"/>
    <property type="project" value="UniProtKB-UniRule"/>
</dbReference>
<dbReference type="GO" id="GO:0008360">
    <property type="term" value="P:regulation of cell shape"/>
    <property type="evidence" value="ECO:0007669"/>
    <property type="project" value="UniProtKB-KW"/>
</dbReference>
<dbReference type="CDD" id="cd06852">
    <property type="entry name" value="GT_MraY"/>
    <property type="match status" value="1"/>
</dbReference>
<dbReference type="HAMAP" id="MF_00038">
    <property type="entry name" value="MraY"/>
    <property type="match status" value="1"/>
</dbReference>
<dbReference type="InterPro" id="IPR000715">
    <property type="entry name" value="Glycosyl_transferase_4"/>
</dbReference>
<dbReference type="InterPro" id="IPR003524">
    <property type="entry name" value="PNAcMuramoyl-5peptid_Trfase"/>
</dbReference>
<dbReference type="InterPro" id="IPR018480">
    <property type="entry name" value="PNAcMuramoyl-5peptid_Trfase_CS"/>
</dbReference>
<dbReference type="NCBIfam" id="TIGR00445">
    <property type="entry name" value="mraY"/>
    <property type="match status" value="1"/>
</dbReference>
<dbReference type="PANTHER" id="PTHR22926">
    <property type="entry name" value="PHOSPHO-N-ACETYLMURAMOYL-PENTAPEPTIDE-TRANSFERASE"/>
    <property type="match status" value="1"/>
</dbReference>
<dbReference type="PANTHER" id="PTHR22926:SF5">
    <property type="entry name" value="PHOSPHO-N-ACETYLMURAMOYL-PENTAPEPTIDE-TRANSFERASE HOMOLOG"/>
    <property type="match status" value="1"/>
</dbReference>
<dbReference type="Pfam" id="PF00953">
    <property type="entry name" value="Glycos_transf_4"/>
    <property type="match status" value="1"/>
</dbReference>
<dbReference type="Pfam" id="PF10555">
    <property type="entry name" value="MraY_sig1"/>
    <property type="match status" value="1"/>
</dbReference>
<dbReference type="PROSITE" id="PS01347">
    <property type="entry name" value="MRAY_1"/>
    <property type="match status" value="1"/>
</dbReference>
<dbReference type="PROSITE" id="PS01348">
    <property type="entry name" value="MRAY_2"/>
    <property type="match status" value="1"/>
</dbReference>
<keyword id="KW-0131">Cell cycle</keyword>
<keyword id="KW-0132">Cell division</keyword>
<keyword id="KW-0997">Cell inner membrane</keyword>
<keyword id="KW-1003">Cell membrane</keyword>
<keyword id="KW-0133">Cell shape</keyword>
<keyword id="KW-0961">Cell wall biogenesis/degradation</keyword>
<keyword id="KW-0460">Magnesium</keyword>
<keyword id="KW-0472">Membrane</keyword>
<keyword id="KW-0479">Metal-binding</keyword>
<keyword id="KW-0573">Peptidoglycan synthesis</keyword>
<keyword id="KW-1185">Reference proteome</keyword>
<keyword id="KW-0808">Transferase</keyword>
<keyword id="KW-0812">Transmembrane</keyword>
<keyword id="KW-1133">Transmembrane helix</keyword>